<protein>
    <recommendedName>
        <fullName>SLCO1B3-SLCO1B7 readthrough transcript protein</fullName>
    </recommendedName>
    <alternativeName>
        <fullName evidence="8">Liver specific transporter-3 transmembrane 12</fullName>
        <shortName evidence="8 9 11">LST-3TM12</shortName>
    </alternativeName>
    <alternativeName>
        <fullName evidence="10">Organic anion transporting polypeptide 1B3-1B7</fullName>
        <shortName evidence="9 10 11">OATP1B3-1B7</shortName>
    </alternativeName>
    <alternativeName>
        <fullName>Solute carrier organic anion transporter family member 1B3-1B7</fullName>
        <shortName>SLCO1B3-SLCO1B7</shortName>
    </alternativeName>
</protein>
<gene>
    <name evidence="13" type="primary">SLCO1B3-SLCO1B7</name>
</gene>
<feature type="chain" id="PRO_0000456961" description="SLCO1B3-SLCO1B7 readthrough transcript protein">
    <location>
        <begin position="1"/>
        <end position="687"/>
    </location>
</feature>
<feature type="topological domain" description="Cytoplasmic" evidence="12">
    <location>
        <begin position="1"/>
        <end position="29"/>
    </location>
</feature>
<feature type="transmembrane region" description="Helical" evidence="1">
    <location>
        <begin position="30"/>
        <end position="50"/>
    </location>
</feature>
<feature type="topological domain" description="Extracellular" evidence="12">
    <location>
        <begin position="51"/>
        <end position="63"/>
    </location>
</feature>
<feature type="transmembrane region" description="Helical" evidence="1">
    <location>
        <begin position="64"/>
        <end position="84"/>
    </location>
</feature>
<feature type="topological domain" description="Cytoplasmic" evidence="12">
    <location>
        <begin position="85"/>
        <end position="96"/>
    </location>
</feature>
<feature type="transmembrane region" description="Helical" evidence="1">
    <location>
        <begin position="97"/>
        <end position="117"/>
    </location>
</feature>
<feature type="topological domain" description="Extracellular" evidence="12">
    <location>
        <begin position="118"/>
        <end position="170"/>
    </location>
</feature>
<feature type="transmembrane region" description="Helical" evidence="1">
    <location>
        <begin position="171"/>
        <end position="191"/>
    </location>
</feature>
<feature type="topological domain" description="Cytoplasmic" evidence="12">
    <location>
        <begin position="192"/>
        <end position="206"/>
    </location>
</feature>
<feature type="transmembrane region" description="Helical" evidence="1">
    <location>
        <begin position="207"/>
        <end position="227"/>
    </location>
</feature>
<feature type="topological domain" description="Extracellular" evidence="12">
    <location>
        <begin position="228"/>
        <end position="258"/>
    </location>
</feature>
<feature type="transmembrane region" description="Helical" evidence="1">
    <location>
        <begin position="259"/>
        <end position="279"/>
    </location>
</feature>
<feature type="topological domain" description="Cytoplasmic" evidence="12">
    <location>
        <begin position="280"/>
        <end position="339"/>
    </location>
</feature>
<feature type="transmembrane region" description="Helical" evidence="1">
    <location>
        <begin position="340"/>
        <end position="360"/>
    </location>
</feature>
<feature type="topological domain" description="Extracellular" evidence="12">
    <location>
        <begin position="361"/>
        <end position="376"/>
    </location>
</feature>
<feature type="transmembrane region" description="Helical" evidence="1">
    <location>
        <begin position="377"/>
        <end position="397"/>
    </location>
</feature>
<feature type="topological domain" description="Cytoplasmic" evidence="12">
    <location>
        <begin position="398"/>
        <end position="409"/>
    </location>
</feature>
<feature type="transmembrane region" description="Helical" evidence="1">
    <location>
        <begin position="410"/>
        <end position="430"/>
    </location>
</feature>
<feature type="topological domain" description="Extracellular" evidence="12">
    <location>
        <begin position="431"/>
        <end position="539"/>
    </location>
</feature>
<feature type="transmembrane region" description="Helical" evidence="1">
    <location>
        <begin position="540"/>
        <end position="560"/>
    </location>
</feature>
<feature type="topological domain" description="Cytoplasmic" evidence="12">
    <location>
        <begin position="561"/>
        <end position="568"/>
    </location>
</feature>
<feature type="transmembrane region" description="Helical" evidence="1">
    <location>
        <begin position="569"/>
        <end position="589"/>
    </location>
</feature>
<feature type="topological domain" description="Extracellular" evidence="12">
    <location>
        <begin position="590"/>
        <end position="624"/>
    </location>
</feature>
<feature type="transmembrane region" description="Helical" evidence="1">
    <location>
        <begin position="625"/>
        <end position="645"/>
    </location>
</feature>
<feature type="topological domain" description="Cytoplasmic" evidence="12">
    <location>
        <begin position="646"/>
        <end position="687"/>
    </location>
</feature>
<feature type="domain" description="Kazal-like" evidence="2">
    <location>
        <begin position="453"/>
        <end position="508"/>
    </location>
</feature>
<feature type="site" description="Reactive bond" evidence="2">
    <location>
        <begin position="467"/>
        <end position="468"/>
    </location>
</feature>
<feature type="glycosylation site" description="N-linked (GlcNAc...) asparagine" evidence="1">
    <location>
        <position position="134"/>
    </location>
</feature>
<feature type="glycosylation site" description="N-linked (GlcNAc...) asparagine" evidence="1">
    <location>
        <position position="151"/>
    </location>
</feature>
<feature type="glycosylation site" description="N-linked (GlcNAc...) asparagine" evidence="1">
    <location>
        <position position="503"/>
    </location>
</feature>
<feature type="glycosylation site" description="N-linked (GlcNAc...) asparagine" evidence="1">
    <location>
        <position position="516"/>
    </location>
</feature>
<feature type="glycosylation site" description="N-linked (GlcNAc...) asparagine" evidence="1">
    <location>
        <position position="617"/>
    </location>
</feature>
<feature type="disulfide bond" evidence="2">
    <location>
        <begin position="459"/>
        <end position="489"/>
    </location>
</feature>
<feature type="disulfide bond" evidence="2">
    <location>
        <begin position="465"/>
        <end position="485"/>
    </location>
</feature>
<feature type="disulfide bond" evidence="2">
    <location>
        <begin position="474"/>
        <end position="506"/>
    </location>
</feature>
<proteinExistence type="evidence at protein level"/>
<name>SO1BT_HUMAN</name>
<organism>
    <name type="scientific">Homo sapiens</name>
    <name type="common">Human</name>
    <dbReference type="NCBI Taxonomy" id="9606"/>
    <lineage>
        <taxon>Eukaryota</taxon>
        <taxon>Metazoa</taxon>
        <taxon>Chordata</taxon>
        <taxon>Craniata</taxon>
        <taxon>Vertebrata</taxon>
        <taxon>Euteleostomi</taxon>
        <taxon>Mammalia</taxon>
        <taxon>Eutheria</taxon>
        <taxon>Euarchontoglires</taxon>
        <taxon>Primates</taxon>
        <taxon>Haplorrhini</taxon>
        <taxon>Catarrhini</taxon>
        <taxon>Hominidae</taxon>
        <taxon>Homo</taxon>
    </lineage>
</organism>
<comment type="function">
    <text evidence="4 5 6 7">Mediates the Na(+)-independent uptake of organic anions (PubMed:29248594). Transports the conjugated steroids 17-beta-glucuronosyl estradiol (17beta-estradiol 17-O-(beta-D-glucuronate) or E2G) and dehydroepiandrosterone 3-sulfate (DHEAS) at the smooth endoplasmic reticulum membrane (SER), granting access to metabolizing enzymes (PubMed:29248594, PubMed:31127008, PubMed:32818652). Contributes to the metabolism of bile acids such as taurocholate (cholyltaurine) and lithocholate, by functioning as a doorway between SER and cytosol, thereby decreasing their circulating levels and protecting the organism from their detergent properties (PubMed:31509437). Regulates access or exit of drugs to the SER lumen (PubMed:31127008).</text>
</comment>
<comment type="catalytic activity">
    <reaction evidence="4 6">
        <text>17beta-estradiol 17-O-(beta-D-glucuronate)(out) = 17beta-estradiol 17-O-(beta-D-glucuronate)(in)</text>
        <dbReference type="Rhea" id="RHEA:72691"/>
        <dbReference type="ChEBI" id="CHEBI:82961"/>
    </reaction>
</comment>
<comment type="catalytic activity">
    <reaction evidence="4 5 6 7">
        <text>dehydroepiandrosterone 3-sulfate(out) = dehydroepiandrosterone 3-sulfate(in)</text>
        <dbReference type="Rhea" id="RHEA:71839"/>
        <dbReference type="ChEBI" id="CHEBI:57905"/>
    </reaction>
</comment>
<comment type="catalytic activity">
    <reaction evidence="6">
        <text>taurocholate(out) = taurocholate(in)</text>
        <dbReference type="Rhea" id="RHEA:71703"/>
        <dbReference type="ChEBI" id="CHEBI:36257"/>
    </reaction>
</comment>
<comment type="catalytic activity">
    <reaction evidence="6">
        <text>lithocholate(out) = lithocholate(in)</text>
        <dbReference type="Rhea" id="RHEA:73139"/>
        <dbReference type="ChEBI" id="CHEBI:29744"/>
    </reaction>
</comment>
<comment type="activity regulation">
    <text evidence="6">Transport activity is induced by farnesoid X receptor (FXR) agonists such as chenodeoxycholate.</text>
</comment>
<comment type="biophysicochemical properties">
    <kinetics>
        <KM evidence="4">32.8 uM for 17beta-estradiol 17-O-(beta-D-glucuronate)</KM>
        <KM evidence="4">34.2 uM for dehydroepiandrosterone sulfate</KM>
        <KM evidence="7">20.4 uM for dehydroepiandrosterone sulfate</KM>
        <KM evidence="6">15.99 uM for taurocholate</KM>
        <Vmax evidence="4">29.7 pmol/min/mg protein with 17beta-estradiol 17-O-(beta-D-glucuronate)</Vmax>
        <Vmax evidence="4">300.2 pmol/min/mg protein with dehydroepiandrosterone sulfate</Vmax>
        <Vmax evidence="7">264.3 pmol/min/mg protein with dehydroepiandrosterone sulfate</Vmax>
        <Vmax evidence="6">17.38 pmol/min/mg protein with taurocholate</Vmax>
    </kinetics>
</comment>
<comment type="subcellular location">
    <subcellularLocation>
        <location evidence="4">Smooth endoplasmic reticulum membrane</location>
        <topology evidence="3">Multi-pass membrane protein</topology>
    </subcellularLocation>
    <subcellularLocation>
        <location evidence="4 7">Cell membrane</location>
        <topology>Multi-pass membrane protein</topology>
    </subcellularLocation>
    <subcellularLocation>
        <location evidence="4">Endoplasmic reticulum membrane</location>
        <topology>Multi-pass membrane protein</topology>
    </subcellularLocation>
</comment>
<comment type="alternative products">
    <event type="alternative splicing"/>
    <isoform>
        <id>F5H094-1</id>
        <name>SLCO1B3-SLCO1B7-1</name>
        <sequence type="displayed"/>
    </isoform>
    <isoform>
        <id>Q9NPD5-1</id>
        <name>SLCO1B3-1</name>
        <sequence type="external"/>
    </isoform>
    <isoform>
        <id>Q9NPD5-2</id>
        <name>SLCO1B3-2</name>
        <sequence type="external"/>
    </isoform>
    <isoform>
        <id>G3V0H7-1</id>
        <name>SLCO1B7-1</name>
        <sequence type="external"/>
    </isoform>
</comment>
<comment type="tissue specificity">
    <text evidence="4">Expressed in the perivenular areas (centrilobular) of the liver (at protein level).</text>
</comment>
<comment type="miscellaneous">
    <text evidence="4">Based on a naturally occurring readthrough transcript which produces an SLCO1B3-SLCO1B7 fusion protein where the first five exons originate from SLCO1B3, while SLCO1B7 provides the remaining exons (PubMed:29248594). The resulting mRNA encodes for a functional transporter SLCO1B3-SLCO1B7 (PubMed:29248594).</text>
</comment>
<comment type="similarity">
    <text evidence="12">Belongs to the organo anion transporter (TC 2.A.60) family.</text>
</comment>
<accession>F5H094</accession>
<dbReference type="EMBL" id="AC011604">
    <property type="status" value="NOT_ANNOTATED_CDS"/>
    <property type="molecule type" value="Genomic_DNA"/>
</dbReference>
<dbReference type="EMBL" id="AC087309">
    <property type="status" value="NOT_ANNOTATED_CDS"/>
    <property type="molecule type" value="Genomic_DNA"/>
</dbReference>
<dbReference type="SMR" id="F5H094"/>
<dbReference type="GlyGen" id="F5H094">
    <property type="glycosylation" value="5 sites"/>
</dbReference>
<dbReference type="BioMuta" id="ENSG00000257046"/>
<dbReference type="MassIVE" id="F5H094"/>
<dbReference type="ProteomicsDB" id="25272"/>
<dbReference type="Antibodypedia" id="81980">
    <property type="antibodies" value="37 antibodies from 9 providers"/>
</dbReference>
<dbReference type="Ensembl" id="ENST00000381541.7">
    <molecule id="F5H094-1"/>
    <property type="protein sequence ID" value="ENSP00000370952.3"/>
    <property type="gene ID" value="ENSG00000257046.5"/>
</dbReference>
<dbReference type="UCSC" id="uc010sim.3">
    <molecule id="F5H094-1"/>
    <property type="organism name" value="human"/>
</dbReference>
<dbReference type="AGR" id="HGNC:54403"/>
<dbReference type="GeneCards" id="SLCO1B3-SLCO1B7"/>
<dbReference type="HGNC" id="HGNC:54403">
    <property type="gene designation" value="SLCO1B3-SLCO1B7"/>
</dbReference>
<dbReference type="MalaCards" id="SLCO1B3-SLCO1B7"/>
<dbReference type="OpenTargets" id="ENSG00000257046"/>
<dbReference type="VEuPathDB" id="HostDB:ENSG00000257046"/>
<dbReference type="OMA" id="GIFMKIS"/>
<dbReference type="Proteomes" id="UP000005640">
    <property type="component" value="Chromosome 12"/>
</dbReference>
<dbReference type="Bgee" id="ENSG00000257046">
    <property type="expression patterns" value="Expressed in primordial germ cell in gonad and 12 other cell types or tissues"/>
</dbReference>
<dbReference type="ExpressionAtlas" id="F5H094">
    <property type="expression patterns" value="baseline and differential"/>
</dbReference>
<dbReference type="GO" id="GO:0016323">
    <property type="term" value="C:basolateral plasma membrane"/>
    <property type="evidence" value="ECO:0000318"/>
    <property type="project" value="GO_Central"/>
</dbReference>
<dbReference type="GO" id="GO:0030868">
    <property type="term" value="C:smooth endoplasmic reticulum membrane"/>
    <property type="evidence" value="ECO:0007669"/>
    <property type="project" value="UniProtKB-SubCell"/>
</dbReference>
<dbReference type="GO" id="GO:0015125">
    <property type="term" value="F:bile acid transmembrane transporter activity"/>
    <property type="evidence" value="ECO:0000318"/>
    <property type="project" value="GO_Central"/>
</dbReference>
<dbReference type="GO" id="GO:0004867">
    <property type="term" value="F:serine-type endopeptidase inhibitor activity"/>
    <property type="evidence" value="ECO:0007669"/>
    <property type="project" value="UniProtKB-KW"/>
</dbReference>
<dbReference type="GO" id="GO:0015347">
    <property type="term" value="F:sodium-independent organic anion transmembrane transporter activity"/>
    <property type="evidence" value="ECO:0000318"/>
    <property type="project" value="GO_Central"/>
</dbReference>
<dbReference type="GO" id="GO:0015721">
    <property type="term" value="P:bile acid and bile salt transport"/>
    <property type="evidence" value="ECO:0000318"/>
    <property type="project" value="GO_Central"/>
</dbReference>
<dbReference type="GO" id="GO:0043252">
    <property type="term" value="P:sodium-independent organic anion transport"/>
    <property type="evidence" value="ECO:0000318"/>
    <property type="project" value="GO_Central"/>
</dbReference>
<dbReference type="Gene3D" id="3.30.60.30">
    <property type="match status" value="1"/>
</dbReference>
<dbReference type="Gene3D" id="1.20.1250.20">
    <property type="entry name" value="MFS general substrate transporter like domains"/>
    <property type="match status" value="1"/>
</dbReference>
<dbReference type="InterPro" id="IPR002350">
    <property type="entry name" value="Kazal_dom"/>
</dbReference>
<dbReference type="InterPro" id="IPR036058">
    <property type="entry name" value="Kazal_dom_sf"/>
</dbReference>
<dbReference type="InterPro" id="IPR020846">
    <property type="entry name" value="MFS_dom"/>
</dbReference>
<dbReference type="InterPro" id="IPR036259">
    <property type="entry name" value="MFS_trans_sf"/>
</dbReference>
<dbReference type="InterPro" id="IPR004156">
    <property type="entry name" value="OATP"/>
</dbReference>
<dbReference type="NCBIfam" id="TIGR00805">
    <property type="entry name" value="oat"/>
    <property type="match status" value="1"/>
</dbReference>
<dbReference type="PANTHER" id="PTHR11388">
    <property type="entry name" value="ORGANIC ANION TRANSPORTER"/>
    <property type="match status" value="1"/>
</dbReference>
<dbReference type="PANTHER" id="PTHR11388:SF154">
    <property type="entry name" value="SLCO1B3-SLCO1B7 READTHROUGH TRANSCRIPT PROTEIN-RELATED"/>
    <property type="match status" value="1"/>
</dbReference>
<dbReference type="Pfam" id="PF07648">
    <property type="entry name" value="Kazal_2"/>
    <property type="match status" value="1"/>
</dbReference>
<dbReference type="Pfam" id="PF03137">
    <property type="entry name" value="OATP"/>
    <property type="match status" value="1"/>
</dbReference>
<dbReference type="SUPFAM" id="SSF100895">
    <property type="entry name" value="Kazal-type serine protease inhibitors"/>
    <property type="match status" value="1"/>
</dbReference>
<dbReference type="SUPFAM" id="SSF103473">
    <property type="entry name" value="MFS general substrate transporter"/>
    <property type="match status" value="1"/>
</dbReference>
<dbReference type="PROSITE" id="PS51465">
    <property type="entry name" value="KAZAL_2"/>
    <property type="match status" value="1"/>
</dbReference>
<dbReference type="PROSITE" id="PS50850">
    <property type="entry name" value="MFS"/>
    <property type="match status" value="1"/>
</dbReference>
<evidence type="ECO:0000255" key="1"/>
<evidence type="ECO:0000255" key="2">
    <source>
        <dbReference type="PROSITE-ProRule" id="PRU00798"/>
    </source>
</evidence>
<evidence type="ECO:0000255" key="3">
    <source>
        <dbReference type="RuleBase" id="RU362056"/>
    </source>
</evidence>
<evidence type="ECO:0000269" key="4">
    <source>
    </source>
</evidence>
<evidence type="ECO:0000269" key="5">
    <source>
    </source>
</evidence>
<evidence type="ECO:0000269" key="6">
    <source>
    </source>
</evidence>
<evidence type="ECO:0000269" key="7">
    <source>
    </source>
</evidence>
<evidence type="ECO:0000303" key="8">
    <source>
    </source>
</evidence>
<evidence type="ECO:0000303" key="9">
    <source>
    </source>
</evidence>
<evidence type="ECO:0000303" key="10">
    <source>
    </source>
</evidence>
<evidence type="ECO:0000303" key="11">
    <source>
    </source>
</evidence>
<evidence type="ECO:0000305" key="12"/>
<evidence type="ECO:0000312" key="13">
    <source>
        <dbReference type="HGNC" id="HGNC:54403"/>
    </source>
</evidence>
<sequence>MDQHQHLNKTAESASSEKKKTRRCNGFKMFLAALSFSYIAKALGGIIMKISITQIERRFDISSSLAGLIDGSFEIGNLLVIVFVSYFGSKLHRPKLIGIGCLLMGTGSILTSLPHFFMGYYRYSKETNIDPSENSTSNLPNCLINQMLSLNRTPSEIIERGCVKESGSHMWIYVFMGNMLRGIGETPIVPLGISYIDDFAKEGHSSLYLGTVNVMGMTGLVFAFMLGSLFAKMYVDIGYVDLSTIRITPKDSRWVGAWWLGFLVSGIVSIISSIPFFFLPLNPNKPQKERKVSLFLHVLKTNDKRNQIANLTNRRKYITKNVTGFFQSLKSILTNPLYVIFVIFTLLHMSSYIASLTYIIKMVEQQYGWSASKTNFLLGVLALPAVAIGMFSGGYIIKKFKLSLVGLAKLAFCSATVHLLSQVLYFFLICESKSVAGLTLTYDGNSPVRSHVDVPLSYCNSECNCDESQWEPVCGNNGITYLSPCLAGCKSSSGNKEPIVFYNCSCVEVIGLQNKNYSAHLGECPRDDACTRKSYVYFVIQVLDAFLCAVGLTSYSVLVIRIVQPELKALAIGFHSMIMRSLGGILVPIYFGALIDTTCMKWSTNSCGARGACRIYNSTYLGRAFFGLKVALIFPVLVLLTVFIFVVRKKSHGKDTKVLENERQVMDEANLEFLNDSEHFVPSAEEQ</sequence>
<keyword id="KW-0025">Alternative splicing</keyword>
<keyword id="KW-1003">Cell membrane</keyword>
<keyword id="KW-1015">Disulfide bond</keyword>
<keyword id="KW-0256">Endoplasmic reticulum</keyword>
<keyword id="KW-0325">Glycoprotein</keyword>
<keyword id="KW-0445">Lipid transport</keyword>
<keyword id="KW-0472">Membrane</keyword>
<keyword id="KW-0646">Protease inhibitor</keyword>
<keyword id="KW-1185">Reference proteome</keyword>
<keyword id="KW-0722">Serine protease inhibitor</keyword>
<keyword id="KW-0812">Transmembrane</keyword>
<keyword id="KW-1133">Transmembrane helix</keyword>
<keyword id="KW-0813">Transport</keyword>
<reference key="1">
    <citation type="journal article" date="2006" name="Nature">
        <title>The finished DNA sequence of human chromosome 12.</title>
        <authorList>
            <person name="Scherer S.E."/>
            <person name="Muzny D.M."/>
            <person name="Buhay C.J."/>
            <person name="Chen R."/>
            <person name="Cree A."/>
            <person name="Ding Y."/>
            <person name="Dugan-Rocha S."/>
            <person name="Gill R."/>
            <person name="Gunaratne P."/>
            <person name="Harris R.A."/>
            <person name="Hawes A.C."/>
            <person name="Hernandez J."/>
            <person name="Hodgson A.V."/>
            <person name="Hume J."/>
            <person name="Jackson A."/>
            <person name="Khan Z.M."/>
            <person name="Kovar-Smith C."/>
            <person name="Lewis L.R."/>
            <person name="Lozado R.J."/>
            <person name="Metzker M.L."/>
            <person name="Milosavljevic A."/>
            <person name="Miner G.R."/>
            <person name="Montgomery K.T."/>
            <person name="Morgan M.B."/>
            <person name="Nazareth L.V."/>
            <person name="Scott G."/>
            <person name="Sodergren E."/>
            <person name="Song X.-Z."/>
            <person name="Steffen D."/>
            <person name="Lovering R.C."/>
            <person name="Wheeler D.A."/>
            <person name="Worley K.C."/>
            <person name="Yuan Y."/>
            <person name="Zhang Z."/>
            <person name="Adams C.Q."/>
            <person name="Ansari-Lari M.A."/>
            <person name="Ayele M."/>
            <person name="Brown M.J."/>
            <person name="Chen G."/>
            <person name="Chen Z."/>
            <person name="Clerc-Blankenburg K.P."/>
            <person name="Davis C."/>
            <person name="Delgado O."/>
            <person name="Dinh H.H."/>
            <person name="Draper H."/>
            <person name="Gonzalez-Garay M.L."/>
            <person name="Havlak P."/>
            <person name="Jackson L.R."/>
            <person name="Jacob L.S."/>
            <person name="Kelly S.H."/>
            <person name="Li L."/>
            <person name="Li Z."/>
            <person name="Liu J."/>
            <person name="Liu W."/>
            <person name="Lu J."/>
            <person name="Maheshwari M."/>
            <person name="Nguyen B.-V."/>
            <person name="Okwuonu G.O."/>
            <person name="Pasternak S."/>
            <person name="Perez L.M."/>
            <person name="Plopper F.J.H."/>
            <person name="Santibanez J."/>
            <person name="Shen H."/>
            <person name="Tabor P.E."/>
            <person name="Verduzco D."/>
            <person name="Waldron L."/>
            <person name="Wang Q."/>
            <person name="Williams G.A."/>
            <person name="Zhang J."/>
            <person name="Zhou J."/>
            <person name="Allen C.C."/>
            <person name="Amin A.G."/>
            <person name="Anyalebechi V."/>
            <person name="Bailey M."/>
            <person name="Barbaria J.A."/>
            <person name="Bimage K.E."/>
            <person name="Bryant N.P."/>
            <person name="Burch P.E."/>
            <person name="Burkett C.E."/>
            <person name="Burrell K.L."/>
            <person name="Calderon E."/>
            <person name="Cardenas V."/>
            <person name="Carter K."/>
            <person name="Casias K."/>
            <person name="Cavazos I."/>
            <person name="Cavazos S.R."/>
            <person name="Ceasar H."/>
            <person name="Chacko J."/>
            <person name="Chan S.N."/>
            <person name="Chavez D."/>
            <person name="Christopoulos C."/>
            <person name="Chu J."/>
            <person name="Cockrell R."/>
            <person name="Cox C.D."/>
            <person name="Dang M."/>
            <person name="Dathorne S.R."/>
            <person name="David R."/>
            <person name="Davis C.M."/>
            <person name="Davy-Carroll L."/>
            <person name="Deshazo D.R."/>
            <person name="Donlin J.E."/>
            <person name="D'Souza L."/>
            <person name="Eaves K.A."/>
            <person name="Egan A."/>
            <person name="Emery-Cohen A.J."/>
            <person name="Escotto M."/>
            <person name="Flagg N."/>
            <person name="Forbes L.D."/>
            <person name="Gabisi A.M."/>
            <person name="Garza M."/>
            <person name="Hamilton C."/>
            <person name="Henderson N."/>
            <person name="Hernandez O."/>
            <person name="Hines S."/>
            <person name="Hogues M.E."/>
            <person name="Huang M."/>
            <person name="Idlebird D.G."/>
            <person name="Johnson R."/>
            <person name="Jolivet A."/>
            <person name="Jones S."/>
            <person name="Kagan R."/>
            <person name="King L.M."/>
            <person name="Leal B."/>
            <person name="Lebow H."/>
            <person name="Lee S."/>
            <person name="LeVan J.M."/>
            <person name="Lewis L.C."/>
            <person name="London P."/>
            <person name="Lorensuhewa L.M."/>
            <person name="Loulseged H."/>
            <person name="Lovett D.A."/>
            <person name="Lucier A."/>
            <person name="Lucier R.L."/>
            <person name="Ma J."/>
            <person name="Madu R.C."/>
            <person name="Mapua P."/>
            <person name="Martindale A.D."/>
            <person name="Martinez E."/>
            <person name="Massey E."/>
            <person name="Mawhiney S."/>
            <person name="Meador M.G."/>
            <person name="Mendez S."/>
            <person name="Mercado C."/>
            <person name="Mercado I.C."/>
            <person name="Merritt C.E."/>
            <person name="Miner Z.L."/>
            <person name="Minja E."/>
            <person name="Mitchell T."/>
            <person name="Mohabbat F."/>
            <person name="Mohabbat K."/>
            <person name="Montgomery B."/>
            <person name="Moore N."/>
            <person name="Morris S."/>
            <person name="Munidasa M."/>
            <person name="Ngo R.N."/>
            <person name="Nguyen N.B."/>
            <person name="Nickerson E."/>
            <person name="Nwaokelemeh O.O."/>
            <person name="Nwokenkwo S."/>
            <person name="Obregon M."/>
            <person name="Oguh M."/>
            <person name="Oragunye N."/>
            <person name="Oviedo R.J."/>
            <person name="Parish B.J."/>
            <person name="Parker D.N."/>
            <person name="Parrish J."/>
            <person name="Parks K.L."/>
            <person name="Paul H.A."/>
            <person name="Payton B.A."/>
            <person name="Perez A."/>
            <person name="Perrin W."/>
            <person name="Pickens A."/>
            <person name="Primus E.L."/>
            <person name="Pu L.-L."/>
            <person name="Puazo M."/>
            <person name="Quiles M.M."/>
            <person name="Quiroz J.B."/>
            <person name="Rabata D."/>
            <person name="Reeves K."/>
            <person name="Ruiz S.J."/>
            <person name="Shao H."/>
            <person name="Sisson I."/>
            <person name="Sonaike T."/>
            <person name="Sorelle R.P."/>
            <person name="Sutton A.E."/>
            <person name="Svatek A.F."/>
            <person name="Svetz L.A."/>
            <person name="Tamerisa K.S."/>
            <person name="Taylor T.R."/>
            <person name="Teague B."/>
            <person name="Thomas N."/>
            <person name="Thorn R.D."/>
            <person name="Trejos Z.Y."/>
            <person name="Trevino B.K."/>
            <person name="Ukegbu O.N."/>
            <person name="Urban J.B."/>
            <person name="Vasquez L.I."/>
            <person name="Vera V.A."/>
            <person name="Villasana D.M."/>
            <person name="Wang L."/>
            <person name="Ward-Moore S."/>
            <person name="Warren J.T."/>
            <person name="Wei X."/>
            <person name="White F."/>
            <person name="Williamson A.L."/>
            <person name="Wleczyk R."/>
            <person name="Wooden H.S."/>
            <person name="Wooden S.H."/>
            <person name="Yen J."/>
            <person name="Yoon L."/>
            <person name="Yoon V."/>
            <person name="Zorrilla S.E."/>
            <person name="Nelson D."/>
            <person name="Kucherlapati R."/>
            <person name="Weinstock G."/>
            <person name="Gibbs R.A."/>
        </authorList>
    </citation>
    <scope>NUCLEOTIDE SEQUENCE [LARGE SCALE GENOMIC DNA]</scope>
</reference>
<reference key="2">
    <citation type="journal article" date="2018" name="Biochem. Pharmacol.">
        <title>LST-3TM12 is a member of the OATP1B family and a functional transporter.</title>
        <authorList>
            <person name="Malagnino V."/>
            <person name="Hussner J."/>
            <person name="Seibert I."/>
            <person name="Stolzenburg A."/>
            <person name="Sager C.P."/>
            <person name="Meyer Zu Schwabedissen H.E."/>
        </authorList>
    </citation>
    <scope>NUCLEOTIDE SEQUENCE [MRNA]</scope>
    <scope>FUNCTION</scope>
    <scope>TRANSPORTER ACTIVITY</scope>
    <scope>BIOPHYSICOCHEMICAL PROPERTIES</scope>
    <scope>SUBCELLULAR LOCATION</scope>
    <scope>TISSUE SPECIFICITY</scope>
</reference>
<reference key="3">
    <citation type="journal article" date="2019" name="Mol. Pharmacol.">
        <title>OATP1B3-1B7 (LST-3TM12) Is a Drug Transporter That Affects Endoplasmic Reticulum Access and the Metabolism of Ezetimibe.</title>
        <authorList>
            <person name="Malagnino V."/>
            <person name="Duthaler U."/>
            <person name="Seibert I."/>
            <person name="Kraehenbuehl S."/>
            <person name="Meyer Zu Schwabedissen H.E."/>
        </authorList>
    </citation>
    <scope>FUNCTION</scope>
    <scope>TRANSPORTER ACTIVITY</scope>
</reference>
<reference key="4">
    <citation type="journal article" date="2019" name="Am. J. Physiol.">
        <title>OATP1B3-1B7, a novel organic anion transporting polypeptide, is modulated by FXR ligands and transports bile acids.</title>
        <authorList>
            <person name="Malagnino V."/>
            <person name="Hussner J."/>
            <person name="Issa A."/>
            <person name="Midzic A."/>
            <person name="Meyer Zu Schwabedissen H.E."/>
        </authorList>
    </citation>
    <scope>FUNCTION</scope>
    <scope>TRANSPORTER ACTIVITY</scope>
    <scope>ACTIVITY REGULATION</scope>
    <scope>BIOPHYSICOCHEMICAL PROPERTIES</scope>
    <scope>INDUCTION BY FARNESOID X RECEPTOR</scope>
</reference>
<reference key="5">
    <citation type="journal article" date="2020" name="Pharmacol. Res.">
        <title>Genetic variants of SLCO1B7 are of relevance for the transport function of OATP1B3-1B7.</title>
        <authorList>
            <person name="Meyer Zu Schwabedissen H.E."/>
            <person name="Seibert I."/>
            <person name="Grube M."/>
            <person name="Alter C.L."/>
            <person name="Siegmund W."/>
            <person name="Hussner J."/>
        </authorList>
    </citation>
    <scope>FUNCTION</scope>
    <scope>TRANSPORTER ACTIVITY</scope>
    <scope>BIOPHYSICOCHEMICAL PROPERTIES</scope>
    <scope>SUBCELLULAR LOCATION</scope>
</reference>